<sequence length="71" mass="8104">MRQEIHPKYTEVTVTCSCGNTFVTRSTAGKKEMNIDICSECHPFYTGKQRIVDTAGRVDKFKKRFGGMKKI</sequence>
<evidence type="ECO:0000255" key="1">
    <source>
        <dbReference type="HAMAP-Rule" id="MF_00501"/>
    </source>
</evidence>
<evidence type="ECO:0000305" key="2"/>
<gene>
    <name evidence="1" type="primary">rpmE</name>
    <name type="ordered locus">FTT_0366</name>
</gene>
<reference key="1">
    <citation type="journal article" date="2005" name="Nat. Genet.">
        <title>The complete genome sequence of Francisella tularensis, the causative agent of tularemia.</title>
        <authorList>
            <person name="Larsson P."/>
            <person name="Oyston P.C.F."/>
            <person name="Chain P."/>
            <person name="Chu M.C."/>
            <person name="Duffield M."/>
            <person name="Fuxelius H.-H."/>
            <person name="Garcia E."/>
            <person name="Haelltorp G."/>
            <person name="Johansson D."/>
            <person name="Isherwood K.E."/>
            <person name="Karp P.D."/>
            <person name="Larsson E."/>
            <person name="Liu Y."/>
            <person name="Michell S."/>
            <person name="Prior J."/>
            <person name="Prior R."/>
            <person name="Malfatti S."/>
            <person name="Sjoestedt A."/>
            <person name="Svensson K."/>
            <person name="Thompson N."/>
            <person name="Vergez L."/>
            <person name="Wagg J.K."/>
            <person name="Wren B.W."/>
            <person name="Lindler L.E."/>
            <person name="Andersson S.G.E."/>
            <person name="Forsman M."/>
            <person name="Titball R.W."/>
        </authorList>
    </citation>
    <scope>NUCLEOTIDE SEQUENCE [LARGE SCALE GENOMIC DNA]</scope>
    <source>
        <strain>SCHU S4 / Schu 4</strain>
    </source>
</reference>
<accession>Q5NHS9</accession>
<organism>
    <name type="scientific">Francisella tularensis subsp. tularensis (strain SCHU S4 / Schu 4)</name>
    <dbReference type="NCBI Taxonomy" id="177416"/>
    <lineage>
        <taxon>Bacteria</taxon>
        <taxon>Pseudomonadati</taxon>
        <taxon>Pseudomonadota</taxon>
        <taxon>Gammaproteobacteria</taxon>
        <taxon>Thiotrichales</taxon>
        <taxon>Francisellaceae</taxon>
        <taxon>Francisella</taxon>
    </lineage>
</organism>
<comment type="function">
    <text evidence="1">Binds the 23S rRNA.</text>
</comment>
<comment type="cofactor">
    <cofactor evidence="1">
        <name>Zn(2+)</name>
        <dbReference type="ChEBI" id="CHEBI:29105"/>
    </cofactor>
    <text evidence="1">Binds 1 zinc ion per subunit.</text>
</comment>
<comment type="subunit">
    <text evidence="1">Part of the 50S ribosomal subunit.</text>
</comment>
<comment type="similarity">
    <text evidence="1">Belongs to the bacterial ribosomal protein bL31 family. Type A subfamily.</text>
</comment>
<keyword id="KW-0479">Metal-binding</keyword>
<keyword id="KW-1185">Reference proteome</keyword>
<keyword id="KW-0687">Ribonucleoprotein</keyword>
<keyword id="KW-0689">Ribosomal protein</keyword>
<keyword id="KW-0694">RNA-binding</keyword>
<keyword id="KW-0699">rRNA-binding</keyword>
<keyword id="KW-0862">Zinc</keyword>
<protein>
    <recommendedName>
        <fullName evidence="1">Large ribosomal subunit protein bL31</fullName>
    </recommendedName>
    <alternativeName>
        <fullName evidence="2">50S ribosomal protein L31</fullName>
    </alternativeName>
</protein>
<name>RL31_FRATT</name>
<feature type="chain" id="PRO_0000173106" description="Large ribosomal subunit protein bL31">
    <location>
        <begin position="1"/>
        <end position="71"/>
    </location>
</feature>
<feature type="binding site" evidence="1">
    <location>
        <position position="16"/>
    </location>
    <ligand>
        <name>Zn(2+)</name>
        <dbReference type="ChEBI" id="CHEBI:29105"/>
    </ligand>
</feature>
<feature type="binding site" evidence="1">
    <location>
        <position position="18"/>
    </location>
    <ligand>
        <name>Zn(2+)</name>
        <dbReference type="ChEBI" id="CHEBI:29105"/>
    </ligand>
</feature>
<feature type="binding site" evidence="1">
    <location>
        <position position="38"/>
    </location>
    <ligand>
        <name>Zn(2+)</name>
        <dbReference type="ChEBI" id="CHEBI:29105"/>
    </ligand>
</feature>
<feature type="binding site" evidence="1">
    <location>
        <position position="41"/>
    </location>
    <ligand>
        <name>Zn(2+)</name>
        <dbReference type="ChEBI" id="CHEBI:29105"/>
    </ligand>
</feature>
<dbReference type="EMBL" id="AJ749949">
    <property type="protein sequence ID" value="CAG44999.1"/>
    <property type="molecule type" value="Genomic_DNA"/>
</dbReference>
<dbReference type="RefSeq" id="WP_003027123.1">
    <property type="nucleotide sequence ID" value="NZ_CP010290.1"/>
</dbReference>
<dbReference type="RefSeq" id="YP_169413.1">
    <property type="nucleotide sequence ID" value="NC_006570.2"/>
</dbReference>
<dbReference type="SMR" id="Q5NHS9"/>
<dbReference type="STRING" id="177416.FTT_0366"/>
<dbReference type="DNASU" id="3191990"/>
<dbReference type="EnsemblBacteria" id="CAG44999">
    <property type="protein sequence ID" value="CAG44999"/>
    <property type="gene ID" value="FTT_0366"/>
</dbReference>
<dbReference type="KEGG" id="ftu:FTT_0366"/>
<dbReference type="eggNOG" id="COG0254">
    <property type="taxonomic scope" value="Bacteria"/>
</dbReference>
<dbReference type="OrthoDB" id="9803251at2"/>
<dbReference type="Proteomes" id="UP000001174">
    <property type="component" value="Chromosome"/>
</dbReference>
<dbReference type="GO" id="GO:1990904">
    <property type="term" value="C:ribonucleoprotein complex"/>
    <property type="evidence" value="ECO:0007669"/>
    <property type="project" value="UniProtKB-KW"/>
</dbReference>
<dbReference type="GO" id="GO:0005840">
    <property type="term" value="C:ribosome"/>
    <property type="evidence" value="ECO:0007669"/>
    <property type="project" value="UniProtKB-KW"/>
</dbReference>
<dbReference type="GO" id="GO:0046872">
    <property type="term" value="F:metal ion binding"/>
    <property type="evidence" value="ECO:0007669"/>
    <property type="project" value="UniProtKB-KW"/>
</dbReference>
<dbReference type="GO" id="GO:0019843">
    <property type="term" value="F:rRNA binding"/>
    <property type="evidence" value="ECO:0007669"/>
    <property type="project" value="UniProtKB-KW"/>
</dbReference>
<dbReference type="GO" id="GO:0003735">
    <property type="term" value="F:structural constituent of ribosome"/>
    <property type="evidence" value="ECO:0007669"/>
    <property type="project" value="InterPro"/>
</dbReference>
<dbReference type="GO" id="GO:0006412">
    <property type="term" value="P:translation"/>
    <property type="evidence" value="ECO:0007669"/>
    <property type="project" value="UniProtKB-UniRule"/>
</dbReference>
<dbReference type="Gene3D" id="4.10.830.30">
    <property type="entry name" value="Ribosomal protein L31"/>
    <property type="match status" value="1"/>
</dbReference>
<dbReference type="HAMAP" id="MF_00501">
    <property type="entry name" value="Ribosomal_bL31_1"/>
    <property type="match status" value="1"/>
</dbReference>
<dbReference type="InterPro" id="IPR034704">
    <property type="entry name" value="Ribosomal_bL28/bL31-like_sf"/>
</dbReference>
<dbReference type="InterPro" id="IPR002150">
    <property type="entry name" value="Ribosomal_bL31"/>
</dbReference>
<dbReference type="InterPro" id="IPR027491">
    <property type="entry name" value="Ribosomal_bL31_A"/>
</dbReference>
<dbReference type="InterPro" id="IPR042105">
    <property type="entry name" value="Ribosomal_bL31_sf"/>
</dbReference>
<dbReference type="NCBIfam" id="TIGR00105">
    <property type="entry name" value="L31"/>
    <property type="match status" value="1"/>
</dbReference>
<dbReference type="NCBIfam" id="NF000612">
    <property type="entry name" value="PRK00019.1"/>
    <property type="match status" value="1"/>
</dbReference>
<dbReference type="NCBIfam" id="NF001809">
    <property type="entry name" value="PRK00528.1"/>
    <property type="match status" value="1"/>
</dbReference>
<dbReference type="PANTHER" id="PTHR33280">
    <property type="entry name" value="50S RIBOSOMAL PROTEIN L31, CHLOROPLASTIC"/>
    <property type="match status" value="1"/>
</dbReference>
<dbReference type="PANTHER" id="PTHR33280:SF6">
    <property type="entry name" value="LARGE RIBOSOMAL SUBUNIT PROTEIN BL31A"/>
    <property type="match status" value="1"/>
</dbReference>
<dbReference type="Pfam" id="PF01197">
    <property type="entry name" value="Ribosomal_L31"/>
    <property type="match status" value="1"/>
</dbReference>
<dbReference type="PRINTS" id="PR01249">
    <property type="entry name" value="RIBOSOMALL31"/>
</dbReference>
<dbReference type="SUPFAM" id="SSF143800">
    <property type="entry name" value="L28p-like"/>
    <property type="match status" value="1"/>
</dbReference>
<dbReference type="PROSITE" id="PS01143">
    <property type="entry name" value="RIBOSOMAL_L31"/>
    <property type="match status" value="1"/>
</dbReference>
<proteinExistence type="inferred from homology"/>